<dbReference type="EC" id="2.1.1.190" evidence="1"/>
<dbReference type="EMBL" id="CP002339">
    <property type="protein sequence ID" value="AEF04458.1"/>
    <property type="molecule type" value="Genomic_DNA"/>
</dbReference>
<dbReference type="RefSeq" id="WP_013785383.1">
    <property type="nucleotide sequence ID" value="NC_015554.1"/>
</dbReference>
<dbReference type="SMR" id="F5ZEI8"/>
<dbReference type="KEGG" id="alt:ambt_14740"/>
<dbReference type="eggNOG" id="COG2265">
    <property type="taxonomic scope" value="Bacteria"/>
</dbReference>
<dbReference type="HOGENOM" id="CLU_014689_8_2_6"/>
<dbReference type="OrthoDB" id="9804590at2"/>
<dbReference type="Proteomes" id="UP000000683">
    <property type="component" value="Chromosome"/>
</dbReference>
<dbReference type="GO" id="GO:0051539">
    <property type="term" value="F:4 iron, 4 sulfur cluster binding"/>
    <property type="evidence" value="ECO:0007669"/>
    <property type="project" value="UniProtKB-KW"/>
</dbReference>
<dbReference type="GO" id="GO:0005506">
    <property type="term" value="F:iron ion binding"/>
    <property type="evidence" value="ECO:0007669"/>
    <property type="project" value="UniProtKB-UniRule"/>
</dbReference>
<dbReference type="GO" id="GO:0003723">
    <property type="term" value="F:RNA binding"/>
    <property type="evidence" value="ECO:0007669"/>
    <property type="project" value="InterPro"/>
</dbReference>
<dbReference type="GO" id="GO:0070041">
    <property type="term" value="F:rRNA (uridine-C5-)-methyltransferase activity"/>
    <property type="evidence" value="ECO:0007669"/>
    <property type="project" value="UniProtKB-UniRule"/>
</dbReference>
<dbReference type="GO" id="GO:0070475">
    <property type="term" value="P:rRNA base methylation"/>
    <property type="evidence" value="ECO:0007669"/>
    <property type="project" value="TreeGrafter"/>
</dbReference>
<dbReference type="CDD" id="cd02440">
    <property type="entry name" value="AdoMet_MTases"/>
    <property type="match status" value="1"/>
</dbReference>
<dbReference type="Gene3D" id="2.40.50.1070">
    <property type="match status" value="1"/>
</dbReference>
<dbReference type="Gene3D" id="2.40.50.140">
    <property type="entry name" value="Nucleic acid-binding proteins"/>
    <property type="match status" value="1"/>
</dbReference>
<dbReference type="Gene3D" id="3.40.50.150">
    <property type="entry name" value="Vaccinia Virus protein VP39"/>
    <property type="match status" value="1"/>
</dbReference>
<dbReference type="HAMAP" id="MF_01010">
    <property type="entry name" value="23SrRNA_methyltr_RlmD"/>
    <property type="match status" value="1"/>
</dbReference>
<dbReference type="InterPro" id="IPR001566">
    <property type="entry name" value="23S_rRNA_MeTrfase_RlmD"/>
</dbReference>
<dbReference type="InterPro" id="IPR030390">
    <property type="entry name" value="MeTrfase_TrmA_AS"/>
</dbReference>
<dbReference type="InterPro" id="IPR012340">
    <property type="entry name" value="NA-bd_OB-fold"/>
</dbReference>
<dbReference type="InterPro" id="IPR029063">
    <property type="entry name" value="SAM-dependent_MTases_sf"/>
</dbReference>
<dbReference type="InterPro" id="IPR002792">
    <property type="entry name" value="TRAM_dom"/>
</dbReference>
<dbReference type="InterPro" id="IPR010280">
    <property type="entry name" value="U5_MeTrfase_fam"/>
</dbReference>
<dbReference type="NCBIfam" id="TIGR00479">
    <property type="entry name" value="rumA"/>
    <property type="match status" value="1"/>
</dbReference>
<dbReference type="PANTHER" id="PTHR11061:SF49">
    <property type="entry name" value="23S RRNA (URACIL(1939)-C(5))-METHYLTRANSFERASE RLMD"/>
    <property type="match status" value="1"/>
</dbReference>
<dbReference type="PANTHER" id="PTHR11061">
    <property type="entry name" value="RNA M5U METHYLTRANSFERASE"/>
    <property type="match status" value="1"/>
</dbReference>
<dbReference type="Pfam" id="PF05958">
    <property type="entry name" value="tRNA_U5-meth_tr"/>
    <property type="match status" value="1"/>
</dbReference>
<dbReference type="SUPFAM" id="SSF50249">
    <property type="entry name" value="Nucleic acid-binding proteins"/>
    <property type="match status" value="1"/>
</dbReference>
<dbReference type="SUPFAM" id="SSF53335">
    <property type="entry name" value="S-adenosyl-L-methionine-dependent methyltransferases"/>
    <property type="match status" value="1"/>
</dbReference>
<dbReference type="PROSITE" id="PS51687">
    <property type="entry name" value="SAM_MT_RNA_M5U"/>
    <property type="match status" value="1"/>
</dbReference>
<dbReference type="PROSITE" id="PS50926">
    <property type="entry name" value="TRAM"/>
    <property type="match status" value="1"/>
</dbReference>
<dbReference type="PROSITE" id="PS01230">
    <property type="entry name" value="TRMA_1"/>
    <property type="match status" value="1"/>
</dbReference>
<proteinExistence type="inferred from homology"/>
<reference key="1">
    <citation type="journal article" date="2011" name="J. Bacteriol.">
        <title>Complete genome sequence of the polycyclic aromatic hydrocarbon-degrading bacterium Alteromonas sp. strain SN2.</title>
        <authorList>
            <person name="Jin H.M."/>
            <person name="Jeong H."/>
            <person name="Moon E.J."/>
            <person name="Math R.K."/>
            <person name="Lee K."/>
            <person name="Kim H.J."/>
            <person name="Jeon C.O."/>
            <person name="Oh T.K."/>
            <person name="Kim J.F."/>
        </authorList>
    </citation>
    <scope>NUCLEOTIDE SEQUENCE [LARGE SCALE GENOMIC DNA]</scope>
    <source>
        <strain>JCM 17741 / KACC 18427 / KCTC 11700BP / SN2</strain>
    </source>
</reference>
<name>RLMD_ALTNA</name>
<keyword id="KW-0004">4Fe-4S</keyword>
<keyword id="KW-0408">Iron</keyword>
<keyword id="KW-0411">Iron-sulfur</keyword>
<keyword id="KW-0479">Metal-binding</keyword>
<keyword id="KW-0489">Methyltransferase</keyword>
<keyword id="KW-0698">rRNA processing</keyword>
<keyword id="KW-0949">S-adenosyl-L-methionine</keyword>
<keyword id="KW-0808">Transferase</keyword>
<sequence length="473" mass="51345">MAIFYKPSKGKNKSNVKGRVRGAGSGEKQHIVKTKQSWPSVDDINAANEAVTIDGMDWQGQGVARGDTLYFVDGALPGETVEIKALSSNKQIVNAKVTKVNTPSEHRQKPFCGVANQCGGCQLQHVEPQEALALRDDALKSMFQRKLGFNEGAWQAPVSGNRPRYRRKARLAIDARNPDKIKLGFRENAGKNIVDIEGCPVLVESLSQLIAPLKSAITGYASARLVGHVSLLAGENAVQVTVKHTRSLANDFIASLSQFAVEQNVNMTIEDGNGEFTHLHEIAPITCNTVDGFYLQPGPNDFVQVNAEVNTKMVAQALSWLAPKAGERIADWFSGLGNFTLPIANSGATVSAVEGVAEMVQRAKSNALEQGITNVDWMQLDLADEKSVDKALAGGFDKVLLDPSREGALTVCHALVRATPNTIVYVSCNPNTFSRDARVLIDGGYQMQKAGVVEMFPFTHHMETMALFTRQQQ</sequence>
<organism>
    <name type="scientific">Alteromonas naphthalenivorans</name>
    <dbReference type="NCBI Taxonomy" id="715451"/>
    <lineage>
        <taxon>Bacteria</taxon>
        <taxon>Pseudomonadati</taxon>
        <taxon>Pseudomonadota</taxon>
        <taxon>Gammaproteobacteria</taxon>
        <taxon>Alteromonadales</taxon>
        <taxon>Alteromonadaceae</taxon>
        <taxon>Alteromonas/Salinimonas group</taxon>
        <taxon>Alteromonas</taxon>
    </lineage>
</organism>
<evidence type="ECO:0000255" key="1">
    <source>
        <dbReference type="HAMAP-Rule" id="MF_01010"/>
    </source>
</evidence>
<evidence type="ECO:0000256" key="2">
    <source>
        <dbReference type="SAM" id="MobiDB-lite"/>
    </source>
</evidence>
<gene>
    <name evidence="1" type="primary">rlmD</name>
    <name type="ordered locus">ambt_14740</name>
</gene>
<protein>
    <recommendedName>
        <fullName evidence="1">23S rRNA (uracil(1939)-C(5))-methyltransferase RlmD</fullName>
        <ecNumber evidence="1">2.1.1.190</ecNumber>
    </recommendedName>
    <alternativeName>
        <fullName evidence="1">23S rRNA(m5U1939)-methyltransferase</fullName>
    </alternativeName>
</protein>
<comment type="function">
    <text evidence="1">Catalyzes the formation of 5-methyl-uridine at position 1939 (m5U1939) in 23S rRNA.</text>
</comment>
<comment type="catalytic activity">
    <reaction evidence="1">
        <text>uridine(1939) in 23S rRNA + S-adenosyl-L-methionine = 5-methyluridine(1939) in 23S rRNA + S-adenosyl-L-homocysteine + H(+)</text>
        <dbReference type="Rhea" id="RHEA:42908"/>
        <dbReference type="Rhea" id="RHEA-COMP:10278"/>
        <dbReference type="Rhea" id="RHEA-COMP:10279"/>
        <dbReference type="ChEBI" id="CHEBI:15378"/>
        <dbReference type="ChEBI" id="CHEBI:57856"/>
        <dbReference type="ChEBI" id="CHEBI:59789"/>
        <dbReference type="ChEBI" id="CHEBI:65315"/>
        <dbReference type="ChEBI" id="CHEBI:74447"/>
        <dbReference type="EC" id="2.1.1.190"/>
    </reaction>
</comment>
<comment type="similarity">
    <text evidence="1">Belongs to the class I-like SAM-binding methyltransferase superfamily. RNA M5U methyltransferase family. RlmD subfamily.</text>
</comment>
<accession>F5ZEI8</accession>
<feature type="chain" id="PRO_0000414798" description="23S rRNA (uracil(1939)-C(5))-methyltransferase RlmD">
    <location>
        <begin position="1"/>
        <end position="473"/>
    </location>
</feature>
<feature type="domain" description="TRAM" evidence="1">
    <location>
        <begin position="42"/>
        <end position="99"/>
    </location>
</feature>
<feature type="region of interest" description="Disordered" evidence="2">
    <location>
        <begin position="6"/>
        <end position="27"/>
    </location>
</feature>
<feature type="compositionally biased region" description="Basic residues" evidence="2">
    <location>
        <begin position="8"/>
        <end position="20"/>
    </location>
</feature>
<feature type="active site" description="Nucleophile" evidence="1">
    <location>
        <position position="428"/>
    </location>
</feature>
<feature type="binding site" evidence="1">
    <location>
        <position position="112"/>
    </location>
    <ligand>
        <name>[4Fe-4S] cluster</name>
        <dbReference type="ChEBI" id="CHEBI:49883"/>
    </ligand>
</feature>
<feature type="binding site" evidence="1">
    <location>
        <position position="118"/>
    </location>
    <ligand>
        <name>[4Fe-4S] cluster</name>
        <dbReference type="ChEBI" id="CHEBI:49883"/>
    </ligand>
</feature>
<feature type="binding site" evidence="1">
    <location>
        <position position="121"/>
    </location>
    <ligand>
        <name>[4Fe-4S] cluster</name>
        <dbReference type="ChEBI" id="CHEBI:49883"/>
    </ligand>
</feature>
<feature type="binding site" evidence="1">
    <location>
        <position position="199"/>
    </location>
    <ligand>
        <name>[4Fe-4S] cluster</name>
        <dbReference type="ChEBI" id="CHEBI:49883"/>
    </ligand>
</feature>
<feature type="binding site" evidence="1">
    <location>
        <position position="304"/>
    </location>
    <ligand>
        <name>S-adenosyl-L-methionine</name>
        <dbReference type="ChEBI" id="CHEBI:59789"/>
    </ligand>
</feature>
<feature type="binding site" evidence="1">
    <location>
        <position position="333"/>
    </location>
    <ligand>
        <name>S-adenosyl-L-methionine</name>
        <dbReference type="ChEBI" id="CHEBI:59789"/>
    </ligand>
</feature>
<feature type="binding site" evidence="1">
    <location>
        <position position="338"/>
    </location>
    <ligand>
        <name>S-adenosyl-L-methionine</name>
        <dbReference type="ChEBI" id="CHEBI:59789"/>
    </ligand>
</feature>
<feature type="binding site" evidence="1">
    <location>
        <position position="354"/>
    </location>
    <ligand>
        <name>S-adenosyl-L-methionine</name>
        <dbReference type="ChEBI" id="CHEBI:59789"/>
    </ligand>
</feature>
<feature type="binding site" evidence="1">
    <location>
        <position position="381"/>
    </location>
    <ligand>
        <name>S-adenosyl-L-methionine</name>
        <dbReference type="ChEBI" id="CHEBI:59789"/>
    </ligand>
</feature>
<feature type="binding site" evidence="1">
    <location>
        <position position="402"/>
    </location>
    <ligand>
        <name>S-adenosyl-L-methionine</name>
        <dbReference type="ChEBI" id="CHEBI:59789"/>
    </ligand>
</feature>